<proteinExistence type="evidence at protein level"/>
<feature type="chain" id="PRO_0000460128" description="Large ribosomal subunit protein eL42">
    <location>
        <begin position="1"/>
        <end position="111"/>
    </location>
</feature>
<feature type="binding site" evidence="1 13 14">
    <location>
        <position position="12"/>
    </location>
    <ligand>
        <name>Zn(2+)</name>
        <dbReference type="ChEBI" id="CHEBI:29105"/>
    </ligand>
</feature>
<feature type="binding site" evidence="1 13 14">
    <location>
        <position position="15"/>
    </location>
    <ligand>
        <name>Zn(2+)</name>
        <dbReference type="ChEBI" id="CHEBI:29105"/>
    </ligand>
</feature>
<feature type="binding site" evidence="1 13 14">
    <location>
        <position position="72"/>
    </location>
    <ligand>
        <name>Zn(2+)</name>
        <dbReference type="ChEBI" id="CHEBI:29105"/>
    </ligand>
</feature>
<feature type="binding site" evidence="1 13 14">
    <location>
        <position position="77"/>
    </location>
    <ligand>
        <name>Zn(2+)</name>
        <dbReference type="ChEBI" id="CHEBI:29105"/>
    </ligand>
</feature>
<evidence type="ECO:0000269" key="1">
    <source>
    </source>
</evidence>
<evidence type="ECO:0000269" key="2">
    <source>
    </source>
</evidence>
<evidence type="ECO:0000269" key="3">
    <source>
    </source>
</evidence>
<evidence type="ECO:0000269" key="4">
    <source>
    </source>
</evidence>
<evidence type="ECO:0000269" key="5">
    <source>
    </source>
</evidence>
<evidence type="ECO:0000269" key="6">
    <source>
    </source>
</evidence>
<evidence type="ECO:0000269" key="7">
    <source>
    </source>
</evidence>
<evidence type="ECO:0000269" key="8">
    <source>
    </source>
</evidence>
<evidence type="ECO:0000269" key="9">
    <source>
    </source>
</evidence>
<evidence type="ECO:0000269" key="10">
    <source>
    </source>
</evidence>
<evidence type="ECO:0000269" key="11">
    <source>
    </source>
</evidence>
<evidence type="ECO:0000305" key="12"/>
<evidence type="ECO:0007744" key="13">
    <source>
        <dbReference type="PDB" id="3JAG"/>
    </source>
</evidence>
<evidence type="ECO:0007744" key="14">
    <source>
        <dbReference type="PDB" id="3JAH"/>
    </source>
</evidence>
<evidence type="ECO:0007744" key="15">
    <source>
        <dbReference type="PDB" id="5LZS"/>
    </source>
</evidence>
<evidence type="ECO:0007744" key="16">
    <source>
        <dbReference type="PDB" id="5LZT"/>
    </source>
</evidence>
<evidence type="ECO:0007744" key="17">
    <source>
        <dbReference type="PDB" id="6D90"/>
    </source>
</evidence>
<evidence type="ECO:0007744" key="18">
    <source>
        <dbReference type="PDB" id="6D9J"/>
    </source>
</evidence>
<evidence type="ECO:0007744" key="19">
    <source>
        <dbReference type="PDB" id="6GZ3"/>
    </source>
</evidence>
<evidence type="ECO:0007744" key="20">
    <source>
        <dbReference type="PDB" id="6MTB"/>
    </source>
</evidence>
<evidence type="ECO:0007744" key="21">
    <source>
        <dbReference type="PDB" id="6MTC"/>
    </source>
</evidence>
<evidence type="ECO:0007744" key="22">
    <source>
        <dbReference type="PDB" id="6P5I"/>
    </source>
</evidence>
<evidence type="ECO:0007744" key="23">
    <source>
        <dbReference type="PDB" id="6P5J"/>
    </source>
</evidence>
<evidence type="ECO:0007744" key="24">
    <source>
        <dbReference type="PDB" id="6R5Q"/>
    </source>
</evidence>
<evidence type="ECO:0007744" key="25">
    <source>
        <dbReference type="PDB" id="6R6G"/>
    </source>
</evidence>
<evidence type="ECO:0007744" key="26">
    <source>
        <dbReference type="PDB" id="6SGC"/>
    </source>
</evidence>
<evidence type="ECO:0007744" key="27">
    <source>
        <dbReference type="PDB" id="6ZVK"/>
    </source>
</evidence>
<evidence type="ECO:0007744" key="28">
    <source>
        <dbReference type="PDB" id="7A01"/>
    </source>
</evidence>
<evidence type="ECO:0007744" key="29">
    <source>
        <dbReference type="PDB" id="7OYD"/>
    </source>
</evidence>
<evidence type="ECO:0007744" key="30">
    <source>
        <dbReference type="PDB" id="7UCJ"/>
    </source>
</evidence>
<evidence type="ECO:0007744" key="31">
    <source>
        <dbReference type="PDB" id="7UCK"/>
    </source>
</evidence>
<keyword id="KW-0002">3D-structure</keyword>
<keyword id="KW-0963">Cytoplasm</keyword>
<keyword id="KW-1185">Reference proteome</keyword>
<keyword id="KW-0687">Ribonucleoprotein</keyword>
<keyword id="KW-0689">Ribosomal protein</keyword>
<keyword id="KW-0862">Zinc</keyword>
<reference key="1">
    <citation type="journal article" date="2011" name="Nature">
        <title>A high-resolution map of human evolutionary constraint using 29 mammals.</title>
        <authorList>
            <person name="Lindblad-Toh K."/>
            <person name="Garber M."/>
            <person name="Zuk O."/>
            <person name="Lin M.F."/>
            <person name="Parker B.J."/>
            <person name="Washietl S."/>
            <person name="Kheradpour P."/>
            <person name="Ernst J."/>
            <person name="Jordan G."/>
            <person name="Mauceli E."/>
            <person name="Ward L.D."/>
            <person name="Lowe C.B."/>
            <person name="Holloway A.K."/>
            <person name="Clamp M."/>
            <person name="Gnerre S."/>
            <person name="Alfoldi J."/>
            <person name="Beal K."/>
            <person name="Chang J."/>
            <person name="Clawson H."/>
            <person name="Cuff J."/>
            <person name="Di Palma F."/>
            <person name="Fitzgerald S."/>
            <person name="Flicek P."/>
            <person name="Guttman M."/>
            <person name="Hubisz M.J."/>
            <person name="Jaffe D.B."/>
            <person name="Jungreis I."/>
            <person name="Kent W.J."/>
            <person name="Kostka D."/>
            <person name="Lara M."/>
            <person name="Martins A.L."/>
            <person name="Massingham T."/>
            <person name="Moltke I."/>
            <person name="Raney B.J."/>
            <person name="Rasmussen M.D."/>
            <person name="Robinson J."/>
            <person name="Stark A."/>
            <person name="Vilella A.J."/>
            <person name="Wen J."/>
            <person name="Xie X."/>
            <person name="Zody M.C."/>
            <person name="Baldwin J."/>
            <person name="Bloom T."/>
            <person name="Chin C.W."/>
            <person name="Heiman D."/>
            <person name="Nicol R."/>
            <person name="Nusbaum C."/>
            <person name="Young S."/>
            <person name="Wilkinson J."/>
            <person name="Worley K.C."/>
            <person name="Kovar C.L."/>
            <person name="Muzny D.M."/>
            <person name="Gibbs R.A."/>
            <person name="Cree A."/>
            <person name="Dihn H.H."/>
            <person name="Fowler G."/>
            <person name="Jhangiani S."/>
            <person name="Joshi V."/>
            <person name="Lee S."/>
            <person name="Lewis L.R."/>
            <person name="Nazareth L.V."/>
            <person name="Okwuonu G."/>
            <person name="Santibanez J."/>
            <person name="Warren W.C."/>
            <person name="Mardis E.R."/>
            <person name="Weinstock G.M."/>
            <person name="Wilson R.K."/>
            <person name="Delehaunty K."/>
            <person name="Dooling D."/>
            <person name="Fronik C."/>
            <person name="Fulton L."/>
            <person name="Fulton B."/>
            <person name="Graves T."/>
            <person name="Minx P."/>
            <person name="Sodergren E."/>
            <person name="Birney E."/>
            <person name="Margulies E.H."/>
            <person name="Herrero J."/>
            <person name="Green E.D."/>
            <person name="Haussler D."/>
            <person name="Siepel A."/>
            <person name="Goldman N."/>
            <person name="Pollard K.S."/>
            <person name="Pedersen J.S."/>
            <person name="Lander E.S."/>
            <person name="Kellis M."/>
        </authorList>
    </citation>
    <scope>NUCLEOTIDE SEQUENCE [LARGE SCALE GENOMIC DNA]</scope>
    <source>
        <strain>Thorbecke</strain>
    </source>
</reference>
<reference evidence="13 14" key="2">
    <citation type="journal article" date="2015" name="Nature">
        <title>Structural basis for stop codon recognition in eukaryotes.</title>
        <authorList>
            <person name="Brown A."/>
            <person name="Shao S."/>
            <person name="Murray J."/>
            <person name="Hegde R.S."/>
            <person name="Ramakrishnan V."/>
        </authorList>
    </citation>
    <scope>STRUCTURE BY ELECTRON MICROSCOPY (3.45 ANGSTROMS) OF 2-105 OF RIBOSOME</scope>
    <scope>FUNCTION</scope>
    <scope>SUBCELLULAR LOCATION</scope>
    <scope>SUBUNIT</scope>
</reference>
<reference evidence="15 16" key="3">
    <citation type="journal article" date="2016" name="Cell">
        <title>Decoding mammalian ribosome-mRNA states by translational GTPase complexes.</title>
        <authorList>
            <person name="Shao S."/>
            <person name="Murray J."/>
            <person name="Brown A."/>
            <person name="Taunton J."/>
            <person name="Ramakrishnan V."/>
            <person name="Hegde R.S."/>
        </authorList>
    </citation>
    <scope>STRUCTURE BY ELECTRON MICROSCOPY (3.31 ANGSTROMS) OF RIBOSOME</scope>
    <scope>FUNCTION</scope>
    <scope>SUBCELLULAR LOCATION</scope>
    <scope>SUBUNIT</scope>
</reference>
<reference evidence="19" key="4">
    <citation type="journal article" date="2018" name="Cell Rep.">
        <title>tRNA translocation by the eukaryotic 80S ribosome and the impact of GTP hydrolysis.</title>
        <authorList>
            <person name="Flis J."/>
            <person name="Holm M."/>
            <person name="Rundlet E.J."/>
            <person name="Loerke J."/>
            <person name="Hilal T."/>
            <person name="Dabrowski M."/>
            <person name="Burger J."/>
            <person name="Mielke T."/>
            <person name="Blanchard S.C."/>
            <person name="Spahn C.M.T."/>
            <person name="Budkevich T.V."/>
        </authorList>
    </citation>
    <scope>STRUCTURE BY ELECTRON MICROSCOPY (3.60 ANGSTROMS) OF 2-106 OF RIBOSOME</scope>
    <scope>FUNCTION</scope>
    <scope>SUBCELLULAR LOCATION</scope>
    <scope>SUBUNIT</scope>
</reference>
<reference evidence="17 18" key="5">
    <citation type="journal article" date="2018" name="Elife">
        <title>Dual tRNA mimicry in the Cricket paralysis virus IRES uncovers an unexpected similarity with the Hepatitis C Virus IRES.</title>
        <authorList>
            <person name="Pisareva V.P."/>
            <person name="Pisarev A.V."/>
            <person name="Fernandez I.S."/>
        </authorList>
    </citation>
    <scope>STRUCTURE BY ELECTRON MICROSCOPY (3.20 ANGSTROMS) OF RIBOSOME</scope>
    <scope>SUBCELLULAR LOCATION</scope>
    <scope>SUBUNIT</scope>
</reference>
<reference evidence="20 21" key="6">
    <citation type="journal article" date="2018" name="Elife">
        <title>Structures of translationally inactive mammalian ribosomes.</title>
        <authorList>
            <person name="Brown A."/>
            <person name="Baird M.R."/>
            <person name="Yip M.C."/>
            <person name="Murray J."/>
            <person name="Shao S."/>
        </authorList>
    </citation>
    <scope>STRUCTURE BY ELECTRON MICROSCOPY (3.30 ANGSTROMS) OF 2-104 OF RIBOSOME</scope>
    <scope>SUBCELLULAR LOCATION</scope>
    <scope>SUBUNIT</scope>
</reference>
<reference evidence="24 25" key="7">
    <citation type="journal article" date="2019" name="Elife">
        <title>Structural and mutational analysis of the ribosome-arresting human XBP1u.</title>
        <authorList>
            <person name="Shanmuganathan V."/>
            <person name="Schiller N."/>
            <person name="Magoulopoulou A."/>
            <person name="Cheng J."/>
            <person name="Braunger K."/>
            <person name="Cymer F."/>
            <person name="Berninghausen O."/>
            <person name="Beatrix B."/>
            <person name="Kohno K."/>
            <person name="von Heijne G."/>
            <person name="Beckmann R."/>
        </authorList>
    </citation>
    <scope>STRUCTURE BY ELECTRON MICROSCOPY (3.00 ANGSTROMS) OF 2-105 OF RIBOSOME</scope>
    <scope>SUBCELLULAR LOCATION</scope>
    <scope>SUBUNIT</scope>
</reference>
<reference evidence="22 23" key="8">
    <citation type="journal article" date="2019" name="EMBO J.">
        <title>The Israeli acute paralysis virus IRES captures host ribosomes by mimicking a ribosomal state with hybrid tRNAs.</title>
        <authorList>
            <person name="Acosta-Reyes F."/>
            <person name="Neupane R."/>
            <person name="Frank J."/>
            <person name="Fernandez I.S."/>
        </authorList>
    </citation>
    <scope>STRUCTURE BY ELECTRON MICROSCOPY (3.10 ANGSTROMS) OF RIBOSOME</scope>
    <scope>SUBCELLULAR LOCATION</scope>
    <scope>SUBUNIT</scope>
</reference>
<reference evidence="26" key="9">
    <citation type="journal article" date="2019" name="Nat. Struct. Mol. Biol.">
        <title>Mechanism of ribosome stalling during translation of a poly(A) tail.</title>
        <authorList>
            <person name="Chandrasekaran V."/>
            <person name="Juszkiewicz S."/>
            <person name="Choi J."/>
            <person name="Puglisi J.D."/>
            <person name="Brown A."/>
            <person name="Shao S."/>
            <person name="Ramakrishnan V."/>
            <person name="Hegde R.S."/>
        </authorList>
    </citation>
    <scope>STRUCTURE BY ELECTRON MICROSCOPY (2.80 ANGSTROMS) OF RIBOSOME</scope>
    <scope>SUBCELLULAR LOCATION</scope>
    <scope>SUBUNIT</scope>
</reference>
<reference evidence="27 28" key="10">
    <citation type="journal article" date="2020" name="Cell Rep.">
        <title>The Halastavi arva virus intergenic region IRES promotes translation by the simplest possible initiation mechanism.</title>
        <authorList>
            <person name="Abaeva I.S."/>
            <person name="Vicens Q."/>
            <person name="Bochler A."/>
            <person name="Soufari H."/>
            <person name="Simonetti A."/>
            <person name="Pestova T.V."/>
            <person name="Hashem Y."/>
            <person name="Hellen C.U.T."/>
        </authorList>
    </citation>
    <scope>STRUCTURE BY ELECTRON MICROSCOPY (3.49 ANGSTROMS) OF 2-100 OF RIBOSOME</scope>
    <scope>SUBCELLULAR LOCATION</scope>
    <scope>SUBUNIT</scope>
</reference>
<reference evidence="30 31" key="11">
    <citation type="journal article" date="2022" name="Mol. Cell">
        <title>Direct epitranscriptomic regulation of mammalian translation initiation through N4-acetylcytidine.</title>
        <authorList>
            <person name="Arango D."/>
            <person name="Sturgill D."/>
            <person name="Yang R."/>
            <person name="Kanai T."/>
            <person name="Bauer P."/>
            <person name="Roy J."/>
            <person name="Wang Z."/>
            <person name="Hosogane M."/>
            <person name="Schiffers S."/>
            <person name="Oberdoerffer S."/>
        </authorList>
    </citation>
    <scope>STRUCTURE BY ELECTRON MICROSCOPY (2.80 ANGSTROMS) OF 2-10092 OF RIBOSOME</scope>
    <scope>SUBCELLULAR LOCATION</scope>
    <scope>SUBUNIT</scope>
</reference>
<reference evidence="29" key="12">
    <citation type="journal article" date="2023" name="Nature">
        <title>A molecular network of conserved factors keeps ribosomes dormant in the egg.</title>
        <authorList>
            <person name="Leesch F."/>
            <person name="Lorenzo-Orts L."/>
            <person name="Pribitzer C."/>
            <person name="Grishkovskaya I."/>
            <person name="Roehsner J."/>
            <person name="Chugunova A."/>
            <person name="Matzinger M."/>
            <person name="Roitinger E."/>
            <person name="Belacic K."/>
            <person name="Kandolf S."/>
            <person name="Lin T.Y."/>
            <person name="Mechtler K."/>
            <person name="Meinhart A."/>
            <person name="Haselbach D."/>
            <person name="Pauli A."/>
        </authorList>
    </citation>
    <scope>STRUCTURE BY ELECTRON MICROSCOPY (2.30 ANGSTROMS) OF RIBOSOME</scope>
    <scope>SUBCELLULAR LOCATION</scope>
    <scope>SUBUNIT</scope>
</reference>
<accession>G1T040</accession>
<accession>G1U344</accession>
<dbReference type="EMBL" id="AAGW02046141">
    <property type="status" value="NOT_ANNOTATED_CDS"/>
    <property type="molecule type" value="Genomic_DNA"/>
</dbReference>
<dbReference type="PDB" id="3JAG">
    <property type="method" value="EM"/>
    <property type="resolution" value="3.65 A"/>
    <property type="chains" value="o=2-100"/>
</dbReference>
<dbReference type="PDB" id="3JAH">
    <property type="method" value="EM"/>
    <property type="resolution" value="3.45 A"/>
    <property type="chains" value="o=2-100"/>
</dbReference>
<dbReference type="PDB" id="3JAI">
    <property type="method" value="EM"/>
    <property type="resolution" value="3.65 A"/>
    <property type="chains" value="o=2-100"/>
</dbReference>
<dbReference type="PDB" id="5LZS">
    <property type="method" value="EM"/>
    <property type="resolution" value="3.31 A"/>
    <property type="chains" value="o=1-106"/>
</dbReference>
<dbReference type="PDB" id="5LZT">
    <property type="method" value="EM"/>
    <property type="resolution" value="3.65 A"/>
    <property type="chains" value="o=1-106"/>
</dbReference>
<dbReference type="PDB" id="5LZU">
    <property type="method" value="EM"/>
    <property type="resolution" value="3.75 A"/>
    <property type="chains" value="o=1-106"/>
</dbReference>
<dbReference type="PDB" id="5LZV">
    <property type="method" value="EM"/>
    <property type="resolution" value="3.35 A"/>
    <property type="chains" value="o=1-106"/>
</dbReference>
<dbReference type="PDB" id="5LZW">
    <property type="method" value="EM"/>
    <property type="resolution" value="3.53 A"/>
    <property type="chains" value="o=1-106"/>
</dbReference>
<dbReference type="PDB" id="5LZX">
    <property type="method" value="EM"/>
    <property type="resolution" value="3.67 A"/>
    <property type="chains" value="o=1-106"/>
</dbReference>
<dbReference type="PDB" id="5LZY">
    <property type="method" value="EM"/>
    <property type="resolution" value="3.99 A"/>
    <property type="chains" value="o=1-106"/>
</dbReference>
<dbReference type="PDB" id="5LZZ">
    <property type="method" value="EM"/>
    <property type="resolution" value="3.47 A"/>
    <property type="chains" value="o=1-106"/>
</dbReference>
<dbReference type="PDB" id="6D90">
    <property type="method" value="EM"/>
    <property type="resolution" value="3.20 A"/>
    <property type="chains" value="o=1-106"/>
</dbReference>
<dbReference type="PDB" id="6D9J">
    <property type="method" value="EM"/>
    <property type="resolution" value="3.20 A"/>
    <property type="chains" value="o=1-106"/>
</dbReference>
<dbReference type="PDB" id="6FTG">
    <property type="method" value="EM"/>
    <property type="resolution" value="9.10 A"/>
    <property type="chains" value="o=2-100"/>
</dbReference>
<dbReference type="PDB" id="6FTI">
    <property type="method" value="EM"/>
    <property type="resolution" value="4.20 A"/>
    <property type="chains" value="o=2-100"/>
</dbReference>
<dbReference type="PDB" id="6FTJ">
    <property type="method" value="EM"/>
    <property type="resolution" value="4.70 A"/>
    <property type="chains" value="o=2-100"/>
</dbReference>
<dbReference type="PDB" id="6GZ3">
    <property type="method" value="EM"/>
    <property type="resolution" value="3.60 A"/>
    <property type="chains" value="Ao=2-100"/>
</dbReference>
<dbReference type="PDB" id="6MTB">
    <property type="method" value="EM"/>
    <property type="resolution" value="3.60 A"/>
    <property type="chains" value="o=2-100"/>
</dbReference>
<dbReference type="PDB" id="6MTC">
    <property type="method" value="EM"/>
    <property type="resolution" value="3.40 A"/>
    <property type="chains" value="o=2-100"/>
</dbReference>
<dbReference type="PDB" id="6MTD">
    <property type="method" value="EM"/>
    <property type="resolution" value="3.30 A"/>
    <property type="chains" value="o=2-100"/>
</dbReference>
<dbReference type="PDB" id="6MTE">
    <property type="method" value="EM"/>
    <property type="resolution" value="3.40 A"/>
    <property type="chains" value="o=2-100"/>
</dbReference>
<dbReference type="PDB" id="6P5I">
    <property type="method" value="EM"/>
    <property type="resolution" value="3.10 A"/>
    <property type="chains" value="Ao=1-106"/>
</dbReference>
<dbReference type="PDB" id="6P5J">
    <property type="method" value="EM"/>
    <property type="resolution" value="3.10 A"/>
    <property type="chains" value="Ao=1-106"/>
</dbReference>
<dbReference type="PDB" id="6P5K">
    <property type="method" value="EM"/>
    <property type="resolution" value="3.10 A"/>
    <property type="chains" value="Ao=1-106"/>
</dbReference>
<dbReference type="PDB" id="6P5N">
    <property type="method" value="EM"/>
    <property type="resolution" value="3.20 A"/>
    <property type="chains" value="Ao=1-106"/>
</dbReference>
<dbReference type="PDB" id="6R5Q">
    <property type="method" value="EM"/>
    <property type="resolution" value="3.00 A"/>
    <property type="chains" value="o=2-100"/>
</dbReference>
<dbReference type="PDB" id="6R6G">
    <property type="method" value="EM"/>
    <property type="resolution" value="3.70 A"/>
    <property type="chains" value="o=2-100"/>
</dbReference>
<dbReference type="PDB" id="6R6P">
    <property type="method" value="EM"/>
    <property type="resolution" value="3.10 A"/>
    <property type="chains" value="o=2-100"/>
</dbReference>
<dbReference type="PDB" id="6R7Q">
    <property type="method" value="EM"/>
    <property type="resolution" value="3.90 A"/>
    <property type="chains" value="o=2-100"/>
</dbReference>
<dbReference type="PDB" id="6SGC">
    <property type="method" value="EM"/>
    <property type="resolution" value="2.80 A"/>
    <property type="chains" value="o2=1-106"/>
</dbReference>
<dbReference type="PDB" id="6T59">
    <property type="method" value="EM"/>
    <property type="resolution" value="3.11 A"/>
    <property type="chains" value="o3=1-106"/>
</dbReference>
<dbReference type="PDB" id="6ZVK">
    <property type="method" value="EM"/>
    <property type="resolution" value="3.49 A"/>
    <property type="chains" value="F2=2-100"/>
</dbReference>
<dbReference type="PDB" id="7A01">
    <property type="method" value="EM"/>
    <property type="resolution" value="3.60 A"/>
    <property type="chains" value="F2=2-100"/>
</dbReference>
<dbReference type="PDB" id="7MDZ">
    <property type="method" value="EM"/>
    <property type="resolution" value="3.20 A"/>
    <property type="chains" value="o=1-106"/>
</dbReference>
<dbReference type="PDB" id="7O7Y">
    <property type="method" value="EM"/>
    <property type="resolution" value="2.20 A"/>
    <property type="chains" value="Bo=1-106"/>
</dbReference>
<dbReference type="PDB" id="7O7Z">
    <property type="method" value="EM"/>
    <property type="resolution" value="2.40 A"/>
    <property type="chains" value="Bo=1-106"/>
</dbReference>
<dbReference type="PDB" id="7O80">
    <property type="method" value="EM"/>
    <property type="resolution" value="2.90 A"/>
    <property type="chains" value="Bo=1-106"/>
</dbReference>
<dbReference type="PDB" id="7O81">
    <property type="method" value="EM"/>
    <property type="resolution" value="3.10 A"/>
    <property type="chains" value="Bo=1-106"/>
</dbReference>
<dbReference type="PDB" id="7OYD">
    <property type="method" value="EM"/>
    <property type="resolution" value="2.30 A"/>
    <property type="chains" value="o=1-106"/>
</dbReference>
<dbReference type="PDB" id="7TM3">
    <property type="method" value="EM"/>
    <property type="resolution" value="3.25 A"/>
    <property type="chains" value="o=1-106"/>
</dbReference>
<dbReference type="PDB" id="7TUT">
    <property type="method" value="EM"/>
    <property type="resolution" value="3.88 A"/>
    <property type="chains" value="o=1-106"/>
</dbReference>
<dbReference type="PDB" id="7UCJ">
    <property type="method" value="EM"/>
    <property type="resolution" value="3.10 A"/>
    <property type="chains" value="o=2-100"/>
</dbReference>
<dbReference type="PDB" id="7UCK">
    <property type="method" value="EM"/>
    <property type="resolution" value="2.80 A"/>
    <property type="chains" value="o=2-100"/>
</dbReference>
<dbReference type="PDB" id="8B5L">
    <property type="method" value="EM"/>
    <property type="resolution" value="2.86 A"/>
    <property type="chains" value="o=2-104"/>
</dbReference>
<dbReference type="PDB" id="8B6C">
    <property type="method" value="EM"/>
    <property type="resolution" value="2.79 A"/>
    <property type="chains" value="o=2-104"/>
</dbReference>
<dbReference type="PDB" id="8BHF">
    <property type="method" value="EM"/>
    <property type="resolution" value="3.10 A"/>
    <property type="chains" value="b1=2-100"/>
</dbReference>
<dbReference type="PDB" id="8BPO">
    <property type="method" value="EM"/>
    <property type="resolution" value="2.80 A"/>
    <property type="chains" value="n2=1-106"/>
</dbReference>
<dbReference type="PDB" id="8BTK">
    <property type="method" value="EM"/>
    <property type="resolution" value="3.50 A"/>
    <property type="chains" value="Bo=1-106"/>
</dbReference>
<dbReference type="PDB" id="8P2K">
    <property type="method" value="EM"/>
    <property type="resolution" value="2.90 A"/>
    <property type="chains" value="Bo=1-106"/>
</dbReference>
<dbReference type="PDB" id="8RJB">
    <property type="method" value="EM"/>
    <property type="resolution" value="2.69 A"/>
    <property type="chains" value="o=1-106"/>
</dbReference>
<dbReference type="PDB" id="8RJC">
    <property type="method" value="EM"/>
    <property type="resolution" value="2.90 A"/>
    <property type="chains" value="o=1-106"/>
</dbReference>
<dbReference type="PDB" id="8RJD">
    <property type="method" value="EM"/>
    <property type="resolution" value="2.79 A"/>
    <property type="chains" value="o=1-106"/>
</dbReference>
<dbReference type="PDB" id="8SCB">
    <property type="method" value="EM"/>
    <property type="resolution" value="2.50 A"/>
    <property type="chains" value="o=1-106"/>
</dbReference>
<dbReference type="PDB" id="8VFT">
    <property type="method" value="EM"/>
    <property type="resolution" value="3.30 A"/>
    <property type="chains" value="o=1-100"/>
</dbReference>
<dbReference type="PDBsum" id="3JAG"/>
<dbReference type="PDBsum" id="3JAH"/>
<dbReference type="PDBsum" id="3JAI"/>
<dbReference type="PDBsum" id="5LZS"/>
<dbReference type="PDBsum" id="5LZT"/>
<dbReference type="PDBsum" id="5LZU"/>
<dbReference type="PDBsum" id="5LZV"/>
<dbReference type="PDBsum" id="5LZW"/>
<dbReference type="PDBsum" id="5LZX"/>
<dbReference type="PDBsum" id="5LZY"/>
<dbReference type="PDBsum" id="5LZZ"/>
<dbReference type="PDBsum" id="6D90"/>
<dbReference type="PDBsum" id="6D9J"/>
<dbReference type="PDBsum" id="6FTG"/>
<dbReference type="PDBsum" id="6FTI"/>
<dbReference type="PDBsum" id="6FTJ"/>
<dbReference type="PDBsum" id="6GZ3"/>
<dbReference type="PDBsum" id="6MTB"/>
<dbReference type="PDBsum" id="6MTC"/>
<dbReference type="PDBsum" id="6MTD"/>
<dbReference type="PDBsum" id="6MTE"/>
<dbReference type="PDBsum" id="6P5I"/>
<dbReference type="PDBsum" id="6P5J"/>
<dbReference type="PDBsum" id="6P5K"/>
<dbReference type="PDBsum" id="6P5N"/>
<dbReference type="PDBsum" id="6R5Q"/>
<dbReference type="PDBsum" id="6R6G"/>
<dbReference type="PDBsum" id="6R6P"/>
<dbReference type="PDBsum" id="6R7Q"/>
<dbReference type="PDBsum" id="6SGC"/>
<dbReference type="PDBsum" id="6T59"/>
<dbReference type="PDBsum" id="6ZVK"/>
<dbReference type="PDBsum" id="7A01"/>
<dbReference type="PDBsum" id="7MDZ"/>
<dbReference type="PDBsum" id="7O7Y"/>
<dbReference type="PDBsum" id="7O7Z"/>
<dbReference type="PDBsum" id="7O80"/>
<dbReference type="PDBsum" id="7O81"/>
<dbReference type="PDBsum" id="7OYD"/>
<dbReference type="PDBsum" id="7TM3"/>
<dbReference type="PDBsum" id="7TUT"/>
<dbReference type="PDBsum" id="7UCJ"/>
<dbReference type="PDBsum" id="7UCK"/>
<dbReference type="PDBsum" id="8B5L"/>
<dbReference type="PDBsum" id="8B6C"/>
<dbReference type="PDBsum" id="8BHF"/>
<dbReference type="PDBsum" id="8BPO"/>
<dbReference type="PDBsum" id="8BTK"/>
<dbReference type="PDBsum" id="8P2K"/>
<dbReference type="PDBsum" id="8RJB"/>
<dbReference type="PDBsum" id="8RJC"/>
<dbReference type="PDBsum" id="8RJD"/>
<dbReference type="PDBsum" id="8SCB"/>
<dbReference type="PDBsum" id="8VFT"/>
<dbReference type="EMDB" id="EMD-0098"/>
<dbReference type="EMDB" id="EMD-0099"/>
<dbReference type="EMDB" id="EMD-0100"/>
<dbReference type="EMDB" id="EMD-0192"/>
<dbReference type="EMDB" id="EMD-0194"/>
<dbReference type="EMDB" id="EMD-0195"/>
<dbReference type="EMDB" id="EMD-0197"/>
<dbReference type="EMDB" id="EMD-10181"/>
<dbReference type="EMDB" id="EMD-10380"/>
<dbReference type="EMDB" id="EMD-11459"/>
<dbReference type="EMDB" id="EMD-11590"/>
<dbReference type="EMDB" id="EMD-12756"/>
<dbReference type="EMDB" id="EMD-12757"/>
<dbReference type="EMDB" id="EMD-12758"/>
<dbReference type="EMDB" id="EMD-12759"/>
<dbReference type="EMDB" id="EMD-13114"/>
<dbReference type="EMDB" id="EMD-15860"/>
<dbReference type="EMDB" id="EMD-15863"/>
<dbReference type="EMDB" id="EMD-16052"/>
<dbReference type="EMDB" id="EMD-16155"/>
<dbReference type="EMDB" id="EMD-16232"/>
<dbReference type="EMDB" id="EMD-17367"/>
<dbReference type="EMDB" id="EMD-19195"/>
<dbReference type="EMDB" id="EMD-19197"/>
<dbReference type="EMDB" id="EMD-19198"/>
<dbReference type="EMDB" id="EMD-20255"/>
<dbReference type="EMDB" id="EMD-20256"/>
<dbReference type="EMDB" id="EMD-20257"/>
<dbReference type="EMDB" id="EMD-20258"/>
<dbReference type="EMDB" id="EMD-23785"/>
<dbReference type="EMDB" id="EMD-25994"/>
<dbReference type="EMDB" id="EMD-26133"/>
<dbReference type="EMDB" id="EMD-26444"/>
<dbReference type="EMDB" id="EMD-26445"/>
<dbReference type="EMDB" id="EMD-40344"/>
<dbReference type="EMDB" id="EMD-4130"/>
<dbReference type="EMDB" id="EMD-4131"/>
<dbReference type="EMDB" id="EMD-4132"/>
<dbReference type="EMDB" id="EMD-4133"/>
<dbReference type="EMDB" id="EMD-4134"/>
<dbReference type="EMDB" id="EMD-4135"/>
<dbReference type="EMDB" id="EMD-4136"/>
<dbReference type="EMDB" id="EMD-4137"/>
<dbReference type="EMDB" id="EMD-4300"/>
<dbReference type="EMDB" id="EMD-4315"/>
<dbReference type="EMDB" id="EMD-4316"/>
<dbReference type="EMDB" id="EMD-4317"/>
<dbReference type="EMDB" id="EMD-43189"/>
<dbReference type="EMDB" id="EMD-4729"/>
<dbReference type="EMDB" id="EMD-4735"/>
<dbReference type="EMDB" id="EMD-4737"/>
<dbReference type="EMDB" id="EMD-4745"/>
<dbReference type="EMDB" id="EMD-9237"/>
<dbReference type="EMDB" id="EMD-9239"/>
<dbReference type="EMDB" id="EMD-9240"/>
<dbReference type="EMDB" id="EMD-9242"/>
<dbReference type="SMR" id="G1T040"/>
<dbReference type="IntAct" id="G1T040">
    <property type="interactions" value="1"/>
</dbReference>
<dbReference type="Ensembl" id="ENSOCUT00000010850.3">
    <property type="protein sequence ID" value="ENSOCUP00000009335.3"/>
    <property type="gene ID" value="ENSOCUG00000010855.3"/>
</dbReference>
<dbReference type="eggNOG" id="KOG3464">
    <property type="taxonomic scope" value="Eukaryota"/>
</dbReference>
<dbReference type="GeneTree" id="ENSGT00940000161656"/>
<dbReference type="HOGENOM" id="CLU_114645_2_1_1"/>
<dbReference type="OrthoDB" id="2967263at2759"/>
<dbReference type="TreeFam" id="TF300213"/>
<dbReference type="Proteomes" id="UP000001811">
    <property type="component" value="Chromosome X"/>
</dbReference>
<dbReference type="Bgee" id="ENSOCUG00000010855">
    <property type="expression patterns" value="Expressed in blood and 16 other cell types or tissues"/>
</dbReference>
<dbReference type="GO" id="GO:0005829">
    <property type="term" value="C:cytosol"/>
    <property type="evidence" value="ECO:0007669"/>
    <property type="project" value="UniProtKB-ARBA"/>
</dbReference>
<dbReference type="GO" id="GO:1990904">
    <property type="term" value="C:ribonucleoprotein complex"/>
    <property type="evidence" value="ECO:0007669"/>
    <property type="project" value="UniProtKB-KW"/>
</dbReference>
<dbReference type="GO" id="GO:0005840">
    <property type="term" value="C:ribosome"/>
    <property type="evidence" value="ECO:0007669"/>
    <property type="project" value="UniProtKB-KW"/>
</dbReference>
<dbReference type="GO" id="GO:0003735">
    <property type="term" value="F:structural constituent of ribosome"/>
    <property type="evidence" value="ECO:0007669"/>
    <property type="project" value="InterPro"/>
</dbReference>
<dbReference type="GO" id="GO:0006412">
    <property type="term" value="P:translation"/>
    <property type="evidence" value="ECO:0007669"/>
    <property type="project" value="InterPro"/>
</dbReference>
<dbReference type="FunFam" id="3.10.450.80:FF:000001">
    <property type="entry name" value="60S ribosomal protein L44"/>
    <property type="match status" value="1"/>
</dbReference>
<dbReference type="Gene3D" id="3.10.450.80">
    <property type="match status" value="1"/>
</dbReference>
<dbReference type="InterPro" id="IPR000552">
    <property type="entry name" value="Ribosomal_eL44"/>
</dbReference>
<dbReference type="InterPro" id="IPR053708">
    <property type="entry name" value="Ribosomal_LSU_eL42"/>
</dbReference>
<dbReference type="InterPro" id="IPR011332">
    <property type="entry name" value="Ribosomal_zn-bd"/>
</dbReference>
<dbReference type="PANTHER" id="PTHR10369">
    <property type="entry name" value="60S RIBOSOMAL PROTEIN L36A/L44"/>
    <property type="match status" value="1"/>
</dbReference>
<dbReference type="Pfam" id="PF00935">
    <property type="entry name" value="Ribosomal_L44"/>
    <property type="match status" value="1"/>
</dbReference>
<dbReference type="SUPFAM" id="SSF57829">
    <property type="entry name" value="Zn-binding ribosomal proteins"/>
    <property type="match status" value="1"/>
</dbReference>
<dbReference type="PROSITE" id="PS01172">
    <property type="entry name" value="RIBOSOMAL_L44E"/>
    <property type="match status" value="1"/>
</dbReference>
<organism>
    <name type="scientific">Oryctolagus cuniculus</name>
    <name type="common">Rabbit</name>
    <dbReference type="NCBI Taxonomy" id="9986"/>
    <lineage>
        <taxon>Eukaryota</taxon>
        <taxon>Metazoa</taxon>
        <taxon>Chordata</taxon>
        <taxon>Craniata</taxon>
        <taxon>Vertebrata</taxon>
        <taxon>Euteleostomi</taxon>
        <taxon>Mammalia</taxon>
        <taxon>Eutheria</taxon>
        <taxon>Euarchontoglires</taxon>
        <taxon>Glires</taxon>
        <taxon>Lagomorpha</taxon>
        <taxon>Leporidae</taxon>
        <taxon>Oryctolagus</taxon>
    </lineage>
</organism>
<sequence length="111" mass="13060">MVNVPKTRRTFCKKCGKHQPHKVTQYKKGKDSLYAQGKRRYDRKQSGYGGQTKPIFRKKAKTTKKIVLRLECVEPNCRSKRMLAIKRCKHFELGGDKKRKVCYAWKVQPCL</sequence>
<gene>
    <name type="primary">RPL36A</name>
</gene>
<comment type="function">
    <text evidence="1 2 5">Component of the large ribosomal subunit (PubMed:26245381, PubMed:27863242, PubMed:30517857). The ribosome is a large ribonucleoprotein complex responsible for the synthesis of proteins in the cell (PubMed:26245381, PubMed:27863242, PubMed:30517857).</text>
</comment>
<comment type="subunit">
    <text evidence="1 2 3 4 5 6 7 8 9 10 11">Component of the large ribosomal subunit.</text>
</comment>
<comment type="subcellular location">
    <subcellularLocation>
        <location evidence="1 2 3 4 5 6 7 8 9 10 11">Cytoplasm</location>
    </subcellularLocation>
</comment>
<comment type="similarity">
    <text evidence="12">Belongs to the eukaryotic ribosomal protein eL42 family.</text>
</comment>
<protein>
    <recommendedName>
        <fullName>Large ribosomal subunit protein eL42</fullName>
    </recommendedName>
    <alternativeName>
        <fullName>60S ribosomal protein L36a</fullName>
    </alternativeName>
</protein>
<name>RL36A_RABIT</name>